<name>YP089_YEAST</name>
<protein>
    <recommendedName>
        <fullName>Dilute domain-containing protein YPR089W</fullName>
    </recommendedName>
</protein>
<keyword id="KW-0333">Golgi apparatus</keyword>
<keyword id="KW-1185">Reference proteome</keyword>
<gene>
    <name type="ordered locus">YPR089W</name>
    <name type="ORF">YPR090W</name>
</gene>
<reference key="1">
    <citation type="journal article" date="1997" name="Nature">
        <title>The nucleotide sequence of Saccharomyces cerevisiae chromosome XVI.</title>
        <authorList>
            <person name="Bussey H."/>
            <person name="Storms R.K."/>
            <person name="Ahmed A."/>
            <person name="Albermann K."/>
            <person name="Allen E."/>
            <person name="Ansorge W."/>
            <person name="Araujo R."/>
            <person name="Aparicio A."/>
            <person name="Barrell B.G."/>
            <person name="Badcock K."/>
            <person name="Benes V."/>
            <person name="Botstein D."/>
            <person name="Bowman S."/>
            <person name="Brueckner M."/>
            <person name="Carpenter J."/>
            <person name="Cherry J.M."/>
            <person name="Chung E."/>
            <person name="Churcher C.M."/>
            <person name="Coster F."/>
            <person name="Davis K."/>
            <person name="Davis R.W."/>
            <person name="Dietrich F.S."/>
            <person name="Delius H."/>
            <person name="DiPaolo T."/>
            <person name="Dubois E."/>
            <person name="Duesterhoeft A."/>
            <person name="Duncan M."/>
            <person name="Floeth M."/>
            <person name="Fortin N."/>
            <person name="Friesen J.D."/>
            <person name="Fritz C."/>
            <person name="Goffeau A."/>
            <person name="Hall J."/>
            <person name="Hebling U."/>
            <person name="Heumann K."/>
            <person name="Hilbert H."/>
            <person name="Hillier L.W."/>
            <person name="Hunicke-Smith S."/>
            <person name="Hyman R.W."/>
            <person name="Johnston M."/>
            <person name="Kalman S."/>
            <person name="Kleine K."/>
            <person name="Komp C."/>
            <person name="Kurdi O."/>
            <person name="Lashkari D."/>
            <person name="Lew H."/>
            <person name="Lin A."/>
            <person name="Lin D."/>
            <person name="Louis E.J."/>
            <person name="Marathe R."/>
            <person name="Messenguy F."/>
            <person name="Mewes H.-W."/>
            <person name="Mirtipati S."/>
            <person name="Moestl D."/>
            <person name="Mueller-Auer S."/>
            <person name="Namath A."/>
            <person name="Nentwich U."/>
            <person name="Oefner P."/>
            <person name="Pearson D."/>
            <person name="Petel F.X."/>
            <person name="Pohl T.M."/>
            <person name="Purnelle B."/>
            <person name="Rajandream M.A."/>
            <person name="Rechmann S."/>
            <person name="Rieger M."/>
            <person name="Riles L."/>
            <person name="Roberts D."/>
            <person name="Schaefer M."/>
            <person name="Scharfe M."/>
            <person name="Scherens B."/>
            <person name="Schramm S."/>
            <person name="Schroeder M."/>
            <person name="Sdicu A.-M."/>
            <person name="Tettelin H."/>
            <person name="Urrestarazu L.A."/>
            <person name="Ushinsky S."/>
            <person name="Vierendeels F."/>
            <person name="Vissers S."/>
            <person name="Voss H."/>
            <person name="Walsh S.V."/>
            <person name="Wambutt R."/>
            <person name="Wang Y."/>
            <person name="Wedler E."/>
            <person name="Wedler H."/>
            <person name="Winnett E."/>
            <person name="Zhong W.-W."/>
            <person name="Zollner A."/>
            <person name="Vo D.H."/>
            <person name="Hani J."/>
        </authorList>
    </citation>
    <scope>NUCLEOTIDE SEQUENCE [LARGE SCALE GENOMIC DNA]</scope>
    <source>
        <strain>ATCC 204508 / S288c</strain>
    </source>
</reference>
<reference key="2">
    <citation type="submission" date="2003-10" db="EMBL/GenBank/DDBJ databases">
        <authorList>
            <person name="Sethuraman A."/>
            <person name="Cherry J.M."/>
        </authorList>
    </citation>
    <scope>SEQUENCE REVISION</scope>
</reference>
<reference key="3">
    <citation type="journal article" date="2014" name="G3 (Bethesda)">
        <title>The reference genome sequence of Saccharomyces cerevisiae: Then and now.</title>
        <authorList>
            <person name="Engel S.R."/>
            <person name="Dietrich F.S."/>
            <person name="Fisk D.G."/>
            <person name="Binkley G."/>
            <person name="Balakrishnan R."/>
            <person name="Costanzo M.C."/>
            <person name="Dwight S.S."/>
            <person name="Hitz B.C."/>
            <person name="Karra K."/>
            <person name="Nash R.S."/>
            <person name="Weng S."/>
            <person name="Wong E.D."/>
            <person name="Lloyd P."/>
            <person name="Skrzypek M.S."/>
            <person name="Miyasato S.R."/>
            <person name="Simison M."/>
            <person name="Cherry J.M."/>
        </authorList>
    </citation>
    <scope>GENOME REANNOTATION</scope>
    <source>
        <strain>ATCC 204508 / S288c</strain>
    </source>
</reference>
<reference key="4">
    <citation type="journal article" date="2003" name="Genome Biol.">
        <title>Reinvestigation of the Saccharomyces cerevisiae genome annotation by comparison to the genome of a related fungus: Ashbya gossypii.</title>
        <authorList>
            <person name="Brachat S."/>
            <person name="Dietrich F.S."/>
            <person name="Voegeli S."/>
            <person name="Zhang Z."/>
            <person name="Stuart L."/>
            <person name="Lerch A."/>
            <person name="Gates K."/>
            <person name="Gaffney T.D."/>
            <person name="Philippsen P."/>
        </authorList>
    </citation>
    <scope>NUCLEOTIDE SEQUENCE [GENOMIC DNA] OF 105-179</scope>
    <source>
        <strain>S288c / YPH1</strain>
    </source>
</reference>
<reference key="5">
    <citation type="journal article" date="2003" name="Nature">
        <title>Global analysis of protein localization in budding yeast.</title>
        <authorList>
            <person name="Huh W.-K."/>
            <person name="Falvo J.V."/>
            <person name="Gerke L.C."/>
            <person name="Carroll A.S."/>
            <person name="Howson R.W."/>
            <person name="Weissman J.S."/>
            <person name="O'Shea E.K."/>
        </authorList>
    </citation>
    <scope>SUBCELLULAR LOCATION [LARGE SCALE ANALYSIS]</scope>
</reference>
<reference key="6">
    <citation type="journal article" date="2003" name="Nature">
        <title>Global analysis of protein expression in yeast.</title>
        <authorList>
            <person name="Ghaemmaghami S."/>
            <person name="Huh W.-K."/>
            <person name="Bower K."/>
            <person name="Howson R.W."/>
            <person name="Belle A."/>
            <person name="Dephoure N."/>
            <person name="O'Shea E.K."/>
            <person name="Weissman J.S."/>
        </authorList>
    </citation>
    <scope>LEVEL OF PROTEIN EXPRESSION [LARGE SCALE ANALYSIS]</scope>
</reference>
<comment type="subcellular location">
    <subcellularLocation>
        <location evidence="3">Golgi apparatus</location>
    </subcellularLocation>
</comment>
<comment type="miscellaneous">
    <text evidence="4">Present with 3690 molecules/cell in log phase SD medium.</text>
</comment>
<sequence length="888" mass="102579">MNSVWDDARIEDRTVDKPVGSSHAQEKLALVKSTLFKLDQEDRPECDSWVQLVKLICDEDREEEFTTFKELLREVKNVNDKSVTGVALIHYIIVFDRADYIELLHDNPSGAKLDLNLVDDIVGYTPLMWSFSLQRRNCCLELFNAFDEINFNMTNKAGLTAWDMVPPYSPLSEFLEQNNMFRYRTEVKHEIPQISQPKDTSLLMSNEDSTTKETFDNIDLQVAGLTLSPGANDNMFLDSDEKNMNHSQGAATLIDPTYTEDYHGTFDYDKLSPDQYLEFSDFDIPQILNLLISLPQKEPHMTTYPAGLIYQCIRYADHKIKSKPLVESLINLSLTKILTSVSSNGAAGLVSTEASLQAGDIVLQSYWLSCLSFLYYYLCRDDSFFKRHPSVLQELINTIHSIIIELTSSIHCRLISLIDSTLLAYTTIQDVKQTLYKRDWNFFKKRKQAKLLLKEKNRKQLKEQQKKELHRKSQGQENHEEEEGQQDGNDSDDRASTNDDNNSSVSLFYDKEILRHLYPPSFEEQMKPSPLKIVQIFGALSYVLNLHQTHPIFQQQCLSISVNWFATTLFNKILKDKKKRSLSRAHAIQIRLNLSTLESWIQNNDFCVPKPMLIDDFMWQRFPMTLIRDVGEIDLSDPILRNVATYKPIDENNKDLIYDTSNSLFYYQPFHKIAQIHLEPVFQLLQWLQVATTLDSEESLISTMNLLPRITPVQLLKSMEKYNYELNENKFNSKLKKFLNNKIKDSKMSKADAYLQEHEIPYLVLPTIPEMTDLYSKGPDSHSFQPFLPGSIQDDVYEIHDVNFKQRQNEPQISRTNSGTSDFTGDEDKAQYETEGVGESIDINETVEPESNAFNVGNDDYFKELNIPSSTAQRPAWSNNDDMEQNPW</sequence>
<proteinExistence type="evidence at protein level"/>
<feature type="chain" id="PRO_0000257825" description="Dilute domain-containing protein YPR089W">
    <location>
        <begin position="1"/>
        <end position="888"/>
    </location>
</feature>
<feature type="domain" description="Dilute" evidence="1">
    <location>
        <begin position="360"/>
        <end position="745"/>
    </location>
</feature>
<feature type="region of interest" description="Disordered" evidence="2">
    <location>
        <begin position="462"/>
        <end position="504"/>
    </location>
</feature>
<feature type="region of interest" description="Disordered" evidence="2">
    <location>
        <begin position="805"/>
        <end position="827"/>
    </location>
</feature>
<feature type="region of interest" description="Disordered" evidence="2">
    <location>
        <begin position="865"/>
        <end position="888"/>
    </location>
</feature>
<feature type="compositionally biased region" description="Polar residues" evidence="2">
    <location>
        <begin position="809"/>
        <end position="823"/>
    </location>
</feature>
<feature type="compositionally biased region" description="Polar residues" evidence="2">
    <location>
        <begin position="867"/>
        <end position="880"/>
    </location>
</feature>
<dbReference type="EMBL" id="U51033">
    <property type="protein sequence ID" value="AAB68146.2"/>
    <property type="molecule type" value="Genomic_DNA"/>
</dbReference>
<dbReference type="EMBL" id="AY260887">
    <property type="protein sequence ID" value="AAP21755.1"/>
    <property type="molecule type" value="Genomic_DNA"/>
</dbReference>
<dbReference type="EMBL" id="BK006949">
    <property type="protein sequence ID" value="DAA11506.1"/>
    <property type="molecule type" value="Genomic_DNA"/>
</dbReference>
<dbReference type="PIR" id="S70046">
    <property type="entry name" value="S70046"/>
</dbReference>
<dbReference type="RefSeq" id="NP_015414.2">
    <property type="nucleotide sequence ID" value="NM_001184186.1"/>
</dbReference>
<dbReference type="SMR" id="O13585"/>
<dbReference type="BioGRID" id="36259">
    <property type="interactions" value="261"/>
</dbReference>
<dbReference type="DIP" id="DIP-34618N"/>
<dbReference type="FunCoup" id="O13585">
    <property type="interactions" value="31"/>
</dbReference>
<dbReference type="IntAct" id="O13585">
    <property type="interactions" value="15"/>
</dbReference>
<dbReference type="STRING" id="4932.YPR089W"/>
<dbReference type="iPTMnet" id="O13585"/>
<dbReference type="PaxDb" id="4932-YPR089W"/>
<dbReference type="PeptideAtlas" id="O13585"/>
<dbReference type="EnsemblFungi" id="YPR089W_mRNA">
    <property type="protein sequence ID" value="YPR089W"/>
    <property type="gene ID" value="YPR089W"/>
</dbReference>
<dbReference type="GeneID" id="856204"/>
<dbReference type="KEGG" id="sce:YPR089W"/>
<dbReference type="AGR" id="SGD:S000006293"/>
<dbReference type="SGD" id="S000006293">
    <property type="gene designation" value="YPR089W"/>
</dbReference>
<dbReference type="VEuPathDB" id="FungiDB:YPR089W"/>
<dbReference type="eggNOG" id="ENOG502QRMC">
    <property type="taxonomic scope" value="Eukaryota"/>
</dbReference>
<dbReference type="HOGENOM" id="CLU_019651_0_0_1"/>
<dbReference type="InParanoid" id="O13585"/>
<dbReference type="OrthoDB" id="426293at2759"/>
<dbReference type="BioCyc" id="YEAST:G3O-34232-MONOMER"/>
<dbReference type="BioGRID-ORCS" id="856204">
    <property type="hits" value="0 hits in 10 CRISPR screens"/>
</dbReference>
<dbReference type="PRO" id="PR:O13585"/>
<dbReference type="Proteomes" id="UP000002311">
    <property type="component" value="Chromosome XVI"/>
</dbReference>
<dbReference type="RNAct" id="O13585">
    <property type="molecule type" value="protein"/>
</dbReference>
<dbReference type="GO" id="GO:0005794">
    <property type="term" value="C:Golgi apparatus"/>
    <property type="evidence" value="ECO:0007669"/>
    <property type="project" value="UniProtKB-SubCell"/>
</dbReference>
<dbReference type="GO" id="GO:0051020">
    <property type="term" value="F:GTPase binding"/>
    <property type="evidence" value="ECO:0000318"/>
    <property type="project" value="GO_Central"/>
</dbReference>
<dbReference type="CDD" id="cd15473">
    <property type="entry name" value="Myo5p-like_CBD_DIL_ANK"/>
    <property type="match status" value="1"/>
</dbReference>
<dbReference type="Gene3D" id="1.25.40.20">
    <property type="entry name" value="Ankyrin repeat-containing domain"/>
    <property type="match status" value="1"/>
</dbReference>
<dbReference type="InterPro" id="IPR036770">
    <property type="entry name" value="Ankyrin_rpt-contain_sf"/>
</dbReference>
<dbReference type="InterPro" id="IPR002710">
    <property type="entry name" value="Dilute_dom"/>
</dbReference>
<dbReference type="InterPro" id="IPR037986">
    <property type="entry name" value="Myo5p-like_CBD_DIL"/>
</dbReference>
<dbReference type="InterPro" id="IPR052072">
    <property type="entry name" value="Vascular_dev_regulator"/>
</dbReference>
<dbReference type="PANTHER" id="PTHR16027:SF6">
    <property type="entry name" value="DILUTE DOMAIN-CONTAINING PROTEIN"/>
    <property type="match status" value="1"/>
</dbReference>
<dbReference type="PANTHER" id="PTHR16027">
    <property type="entry name" value="DILUTE DOMAIN-CONTAINING PROTEIN YPR089W"/>
    <property type="match status" value="1"/>
</dbReference>
<dbReference type="Pfam" id="PF01843">
    <property type="entry name" value="DIL"/>
    <property type="match status" value="2"/>
</dbReference>
<dbReference type="SMART" id="SM01132">
    <property type="entry name" value="DIL"/>
    <property type="match status" value="1"/>
</dbReference>
<dbReference type="SUPFAM" id="SSF48403">
    <property type="entry name" value="Ankyrin repeat"/>
    <property type="match status" value="1"/>
</dbReference>
<dbReference type="PROSITE" id="PS51126">
    <property type="entry name" value="DILUTE"/>
    <property type="match status" value="1"/>
</dbReference>
<organism>
    <name type="scientific">Saccharomyces cerevisiae (strain ATCC 204508 / S288c)</name>
    <name type="common">Baker's yeast</name>
    <dbReference type="NCBI Taxonomy" id="559292"/>
    <lineage>
        <taxon>Eukaryota</taxon>
        <taxon>Fungi</taxon>
        <taxon>Dikarya</taxon>
        <taxon>Ascomycota</taxon>
        <taxon>Saccharomycotina</taxon>
        <taxon>Saccharomycetes</taxon>
        <taxon>Saccharomycetales</taxon>
        <taxon>Saccharomycetaceae</taxon>
        <taxon>Saccharomyces</taxon>
    </lineage>
</organism>
<evidence type="ECO:0000255" key="1">
    <source>
        <dbReference type="PROSITE-ProRule" id="PRU00503"/>
    </source>
</evidence>
<evidence type="ECO:0000256" key="2">
    <source>
        <dbReference type="SAM" id="MobiDB-lite"/>
    </source>
</evidence>
<evidence type="ECO:0000269" key="3">
    <source>
    </source>
</evidence>
<evidence type="ECO:0000269" key="4">
    <source>
    </source>
</evidence>
<accession>O13585</accession>
<accession>D6W490</accession>
<accession>Q86ZS6</accession>